<gene>
    <name evidence="1" type="primary">secA</name>
    <name type="ordered locus">CMS0673</name>
</gene>
<keyword id="KW-0067">ATP-binding</keyword>
<keyword id="KW-1003">Cell membrane</keyword>
<keyword id="KW-0963">Cytoplasm</keyword>
<keyword id="KW-0472">Membrane</keyword>
<keyword id="KW-0547">Nucleotide-binding</keyword>
<keyword id="KW-0653">Protein transport</keyword>
<keyword id="KW-1278">Translocase</keyword>
<keyword id="KW-0811">Translocation</keyword>
<keyword id="KW-0813">Transport</keyword>
<reference key="1">
    <citation type="journal article" date="2008" name="J. Bacteriol.">
        <title>Genome of the actinomycete plant pathogen Clavibacter michiganensis subsp. sepedonicus suggests recent niche adaptation.</title>
        <authorList>
            <person name="Bentley S.D."/>
            <person name="Corton C."/>
            <person name="Brown S.E."/>
            <person name="Barron A."/>
            <person name="Clark L."/>
            <person name="Doggett J."/>
            <person name="Harris B."/>
            <person name="Ormond D."/>
            <person name="Quail M.A."/>
            <person name="May G."/>
            <person name="Francis D."/>
            <person name="Knudson D."/>
            <person name="Parkhill J."/>
            <person name="Ishimaru C.A."/>
        </authorList>
    </citation>
    <scope>NUCLEOTIDE SEQUENCE [LARGE SCALE GENOMIC DNA]</scope>
    <source>
        <strain>ATCC 33113 / DSM 20744 / JCM 9667 / LMG 2889 / ICMP 2535 / C-1</strain>
    </source>
</reference>
<evidence type="ECO:0000255" key="1">
    <source>
        <dbReference type="HAMAP-Rule" id="MF_01382"/>
    </source>
</evidence>
<evidence type="ECO:0000256" key="2">
    <source>
        <dbReference type="SAM" id="MobiDB-lite"/>
    </source>
</evidence>
<dbReference type="EC" id="7.4.2.8" evidence="1"/>
<dbReference type="EMBL" id="AM849034">
    <property type="protein sequence ID" value="CAQ00795.1"/>
    <property type="molecule type" value="Genomic_DNA"/>
</dbReference>
<dbReference type="RefSeq" id="WP_012298106.1">
    <property type="nucleotide sequence ID" value="NZ_MZMN01000003.1"/>
</dbReference>
<dbReference type="SMR" id="B0RE77"/>
<dbReference type="STRING" id="31964.CMS0673"/>
<dbReference type="KEGG" id="cms:CMS0673"/>
<dbReference type="eggNOG" id="COG0653">
    <property type="taxonomic scope" value="Bacteria"/>
</dbReference>
<dbReference type="HOGENOM" id="CLU_005314_3_0_11"/>
<dbReference type="OrthoDB" id="9805579at2"/>
<dbReference type="Proteomes" id="UP000001318">
    <property type="component" value="Chromosome"/>
</dbReference>
<dbReference type="GO" id="GO:0031522">
    <property type="term" value="C:cell envelope Sec protein transport complex"/>
    <property type="evidence" value="ECO:0007669"/>
    <property type="project" value="TreeGrafter"/>
</dbReference>
<dbReference type="GO" id="GO:0005829">
    <property type="term" value="C:cytosol"/>
    <property type="evidence" value="ECO:0007669"/>
    <property type="project" value="TreeGrafter"/>
</dbReference>
<dbReference type="GO" id="GO:0005886">
    <property type="term" value="C:plasma membrane"/>
    <property type="evidence" value="ECO:0007669"/>
    <property type="project" value="UniProtKB-SubCell"/>
</dbReference>
<dbReference type="GO" id="GO:0005524">
    <property type="term" value="F:ATP binding"/>
    <property type="evidence" value="ECO:0007669"/>
    <property type="project" value="UniProtKB-UniRule"/>
</dbReference>
<dbReference type="GO" id="GO:0008564">
    <property type="term" value="F:protein-exporting ATPase activity"/>
    <property type="evidence" value="ECO:0007669"/>
    <property type="project" value="UniProtKB-EC"/>
</dbReference>
<dbReference type="GO" id="GO:0065002">
    <property type="term" value="P:intracellular protein transmembrane transport"/>
    <property type="evidence" value="ECO:0007669"/>
    <property type="project" value="UniProtKB-UniRule"/>
</dbReference>
<dbReference type="GO" id="GO:0017038">
    <property type="term" value="P:protein import"/>
    <property type="evidence" value="ECO:0007669"/>
    <property type="project" value="InterPro"/>
</dbReference>
<dbReference type="GO" id="GO:0006605">
    <property type="term" value="P:protein targeting"/>
    <property type="evidence" value="ECO:0007669"/>
    <property type="project" value="UniProtKB-UniRule"/>
</dbReference>
<dbReference type="GO" id="GO:0043952">
    <property type="term" value="P:protein transport by the Sec complex"/>
    <property type="evidence" value="ECO:0007669"/>
    <property type="project" value="TreeGrafter"/>
</dbReference>
<dbReference type="CDD" id="cd17928">
    <property type="entry name" value="DEXDc_SecA"/>
    <property type="match status" value="1"/>
</dbReference>
<dbReference type="CDD" id="cd18803">
    <property type="entry name" value="SF2_C_secA"/>
    <property type="match status" value="1"/>
</dbReference>
<dbReference type="FunFam" id="1.10.3060.10:FF:000002">
    <property type="entry name" value="Preprotein translocase subunit SecA"/>
    <property type="match status" value="1"/>
</dbReference>
<dbReference type="FunFam" id="3.40.50.300:FF:000113">
    <property type="entry name" value="Preprotein translocase subunit SecA"/>
    <property type="match status" value="1"/>
</dbReference>
<dbReference type="FunFam" id="3.40.50.300:FF:000334">
    <property type="entry name" value="Protein translocase subunit SecA"/>
    <property type="match status" value="1"/>
</dbReference>
<dbReference type="FunFam" id="3.90.1440.10:FF:000002">
    <property type="entry name" value="Protein translocase subunit SecA"/>
    <property type="match status" value="1"/>
</dbReference>
<dbReference type="Gene3D" id="1.10.3060.10">
    <property type="entry name" value="Helical scaffold and wing domains of SecA"/>
    <property type="match status" value="1"/>
</dbReference>
<dbReference type="Gene3D" id="3.40.50.300">
    <property type="entry name" value="P-loop containing nucleotide triphosphate hydrolases"/>
    <property type="match status" value="2"/>
</dbReference>
<dbReference type="Gene3D" id="3.90.1440.10">
    <property type="entry name" value="SecA, preprotein cross-linking domain"/>
    <property type="match status" value="1"/>
</dbReference>
<dbReference type="HAMAP" id="MF_01382">
    <property type="entry name" value="SecA"/>
    <property type="match status" value="1"/>
</dbReference>
<dbReference type="InterPro" id="IPR014001">
    <property type="entry name" value="Helicase_ATP-bd"/>
</dbReference>
<dbReference type="InterPro" id="IPR001650">
    <property type="entry name" value="Helicase_C-like"/>
</dbReference>
<dbReference type="InterPro" id="IPR027417">
    <property type="entry name" value="P-loop_NTPase"/>
</dbReference>
<dbReference type="InterPro" id="IPR000185">
    <property type="entry name" value="SecA"/>
</dbReference>
<dbReference type="InterPro" id="IPR020937">
    <property type="entry name" value="SecA_CS"/>
</dbReference>
<dbReference type="InterPro" id="IPR011115">
    <property type="entry name" value="SecA_DEAD"/>
</dbReference>
<dbReference type="InterPro" id="IPR014018">
    <property type="entry name" value="SecA_motor_DEAD"/>
</dbReference>
<dbReference type="InterPro" id="IPR011130">
    <property type="entry name" value="SecA_preprotein_X-link_dom"/>
</dbReference>
<dbReference type="InterPro" id="IPR044722">
    <property type="entry name" value="SecA_SF2_C"/>
</dbReference>
<dbReference type="InterPro" id="IPR011116">
    <property type="entry name" value="SecA_Wing/Scaffold"/>
</dbReference>
<dbReference type="InterPro" id="IPR036266">
    <property type="entry name" value="SecA_Wing/Scaffold_sf"/>
</dbReference>
<dbReference type="InterPro" id="IPR036670">
    <property type="entry name" value="SecA_X-link_sf"/>
</dbReference>
<dbReference type="NCBIfam" id="NF009538">
    <property type="entry name" value="PRK12904.1"/>
    <property type="match status" value="1"/>
</dbReference>
<dbReference type="NCBIfam" id="TIGR00963">
    <property type="entry name" value="secA"/>
    <property type="match status" value="1"/>
</dbReference>
<dbReference type="PANTHER" id="PTHR30612:SF0">
    <property type="entry name" value="CHLOROPLAST PROTEIN-TRANSPORTING ATPASE"/>
    <property type="match status" value="1"/>
</dbReference>
<dbReference type="PANTHER" id="PTHR30612">
    <property type="entry name" value="SECA INNER MEMBRANE COMPONENT OF SEC PROTEIN SECRETION SYSTEM"/>
    <property type="match status" value="1"/>
</dbReference>
<dbReference type="Pfam" id="PF21090">
    <property type="entry name" value="P-loop_SecA"/>
    <property type="match status" value="1"/>
</dbReference>
<dbReference type="Pfam" id="PF07517">
    <property type="entry name" value="SecA_DEAD"/>
    <property type="match status" value="1"/>
</dbReference>
<dbReference type="Pfam" id="PF01043">
    <property type="entry name" value="SecA_PP_bind"/>
    <property type="match status" value="1"/>
</dbReference>
<dbReference type="Pfam" id="PF07516">
    <property type="entry name" value="SecA_SW"/>
    <property type="match status" value="1"/>
</dbReference>
<dbReference type="PRINTS" id="PR00906">
    <property type="entry name" value="SECA"/>
</dbReference>
<dbReference type="SMART" id="SM00957">
    <property type="entry name" value="SecA_DEAD"/>
    <property type="match status" value="1"/>
</dbReference>
<dbReference type="SMART" id="SM00958">
    <property type="entry name" value="SecA_PP_bind"/>
    <property type="match status" value="1"/>
</dbReference>
<dbReference type="SUPFAM" id="SSF81886">
    <property type="entry name" value="Helical scaffold and wing domains of SecA"/>
    <property type="match status" value="1"/>
</dbReference>
<dbReference type="SUPFAM" id="SSF52540">
    <property type="entry name" value="P-loop containing nucleoside triphosphate hydrolases"/>
    <property type="match status" value="2"/>
</dbReference>
<dbReference type="SUPFAM" id="SSF81767">
    <property type="entry name" value="Pre-protein crosslinking domain of SecA"/>
    <property type="match status" value="1"/>
</dbReference>
<dbReference type="PROSITE" id="PS01312">
    <property type="entry name" value="SECA"/>
    <property type="match status" value="1"/>
</dbReference>
<dbReference type="PROSITE" id="PS51196">
    <property type="entry name" value="SECA_MOTOR_DEAD"/>
    <property type="match status" value="1"/>
</dbReference>
<feature type="chain" id="PRO_1000087310" description="Protein translocase subunit SecA">
    <location>
        <begin position="1"/>
        <end position="940"/>
    </location>
</feature>
<feature type="region of interest" description="Disordered" evidence="2">
    <location>
        <begin position="884"/>
        <end position="940"/>
    </location>
</feature>
<feature type="compositionally biased region" description="Basic and acidic residues" evidence="2">
    <location>
        <begin position="929"/>
        <end position="940"/>
    </location>
</feature>
<feature type="binding site" evidence="1">
    <location>
        <position position="86"/>
    </location>
    <ligand>
        <name>ATP</name>
        <dbReference type="ChEBI" id="CHEBI:30616"/>
    </ligand>
</feature>
<feature type="binding site" evidence="1">
    <location>
        <begin position="104"/>
        <end position="108"/>
    </location>
    <ligand>
        <name>ATP</name>
        <dbReference type="ChEBI" id="CHEBI:30616"/>
    </ligand>
</feature>
<feature type="binding site" evidence="1">
    <location>
        <position position="494"/>
    </location>
    <ligand>
        <name>ATP</name>
        <dbReference type="ChEBI" id="CHEBI:30616"/>
    </ligand>
</feature>
<accession>B0RE77</accession>
<comment type="function">
    <text evidence="1">Part of the Sec protein translocase complex. Interacts with the SecYEG preprotein conducting channel. Has a central role in coupling the hydrolysis of ATP to the transfer of proteins into and across the cell membrane, serving as an ATP-driven molecular motor driving the stepwise translocation of polypeptide chains across the membrane.</text>
</comment>
<comment type="catalytic activity">
    <reaction evidence="1">
        <text>ATP + H2O + cellular proteinSide 1 = ADP + phosphate + cellular proteinSide 2.</text>
        <dbReference type="EC" id="7.4.2.8"/>
    </reaction>
</comment>
<comment type="subunit">
    <text evidence="1">Monomer and homodimer. Part of the essential Sec protein translocation apparatus which comprises SecA, SecYEG and auxiliary proteins SecDF. Other proteins may also be involved.</text>
</comment>
<comment type="subcellular location">
    <subcellularLocation>
        <location evidence="1">Cell membrane</location>
        <topology evidence="1">Peripheral membrane protein</topology>
        <orientation evidence="1">Cytoplasmic side</orientation>
    </subcellularLocation>
    <subcellularLocation>
        <location evidence="1">Cytoplasm</location>
    </subcellularLocation>
    <text evidence="1">Distribution is 50-50.</text>
</comment>
<comment type="similarity">
    <text evidence="1">Belongs to the SecA family.</text>
</comment>
<proteinExistence type="inferred from homology"/>
<protein>
    <recommendedName>
        <fullName evidence="1">Protein translocase subunit SecA</fullName>
        <ecNumber evidence="1">7.4.2.8</ecNumber>
    </recommendedName>
</protein>
<name>SECA_CLASE</name>
<sequence length="940" mass="104589">MASVLEKVLRVGEGRTLRKLQNYAKAVNQLEEDFTHLTDEELKNETVELRERHANGESLDDLLPEAFAAVREASRRTLGLRHFDVQIMGGAALHLGNIAEMKTGEGKTLVATLPAYLNAIASRGVHVITVNDYLASYQSELMGRVFRALGMTTGVILAGQTPQQRREQYAADITYGTNNEFGFDYLRDNMAWQASDMVQRGHFFAVVDEVDSILIDEARTPLIISGPSAGDANRWFTEFANVAKRLVPEVDYEVDEKKRTVGVLETGIEKVEDHLGIDNLYESANTPLISFLNNSIKAKALFKKDKDYVVMNGEVLIVDEHTGRILMGRRYNEGIHQAIEAKEGVAVKAENQTLATVTLQNYFRLYKKLSGMTGTAETEAAEFMSTYKLGVVPIPTNRPMQRKDQSDLIYKNEKAKFEQVVEDIAERHAAGQPVLVGTTSVEKSEYLSKLLAKKGVRHEVLNAKNHAREAAIVAQAGHLGSVTVATNMAGRGTDIMLGGNAEFLAVAAMNARGLSPVETPEQYETEWDDVFAQVKAEVDEEAAKVIEAGGLYVLGTERHESRRIDNQLRGRSGRQGDPGESRFYLSLTDDLMRLFNNGAAASLMGRDSVPDDVAIESKVVSRAIRSAQGQVEARNAEIRKNVLKYDDVLNRQREAIYGDRRHILEGDDLQERSQRFLEAVIDDVLDSHIGEGNGDDWDFDALWTELKTLYPISITIDEVITEAGSKGRVNRDFVRREILSDAKLAYSKREEQLGEAAMRELERRVVLSVIDRRWREHLYEMDYLKDGIGLRAMAQRDPLVEYQREGFALFQQMMGAIREETVGFLFNLEVEVQAPADAESVGPRIQAKGLAANQATADKLRYTAPTDDGGVEVRNQRGQIEKAATAKAQKDQQAEDAVLVGEDEPETPQGPPARGAFGQPTGASSAPQNREERRKADRRK</sequence>
<organism>
    <name type="scientific">Clavibacter sepedonicus</name>
    <name type="common">Clavibacter michiganensis subsp. sepedonicus</name>
    <dbReference type="NCBI Taxonomy" id="31964"/>
    <lineage>
        <taxon>Bacteria</taxon>
        <taxon>Bacillati</taxon>
        <taxon>Actinomycetota</taxon>
        <taxon>Actinomycetes</taxon>
        <taxon>Micrococcales</taxon>
        <taxon>Microbacteriaceae</taxon>
        <taxon>Clavibacter</taxon>
    </lineage>
</organism>